<reference key="1">
    <citation type="journal article" date="2000" name="Eur. J. Biochem.">
        <title>Hev b 9, an enolase and a new cross-reactive allergen from hevea latex and molds. Purification, characterization, cloning and expression.</title>
        <authorList>
            <person name="Wagner S."/>
            <person name="Breiteneder H."/>
            <person name="Simon-Nobbe B."/>
            <person name="Susani M."/>
            <person name="Krebitz M."/>
            <person name="Niggemann B."/>
            <person name="Brehler R."/>
            <person name="Scheiner O."/>
            <person name="Hoffmann-Sommergruber K."/>
        </authorList>
    </citation>
    <scope>NUCLEOTIDE SEQUENCE [MRNA]</scope>
    <scope>ALLERGEN</scope>
    <source>
        <tissue>Latex</tissue>
    </source>
</reference>
<accession>Q9LEJ0</accession>
<organism>
    <name type="scientific">Hevea brasiliensis</name>
    <name type="common">Para rubber tree</name>
    <name type="synonym">Siphonia brasiliensis</name>
    <dbReference type="NCBI Taxonomy" id="3981"/>
    <lineage>
        <taxon>Eukaryota</taxon>
        <taxon>Viridiplantae</taxon>
        <taxon>Streptophyta</taxon>
        <taxon>Embryophyta</taxon>
        <taxon>Tracheophyta</taxon>
        <taxon>Spermatophyta</taxon>
        <taxon>Magnoliopsida</taxon>
        <taxon>eudicotyledons</taxon>
        <taxon>Gunneridae</taxon>
        <taxon>Pentapetalae</taxon>
        <taxon>rosids</taxon>
        <taxon>fabids</taxon>
        <taxon>Malpighiales</taxon>
        <taxon>Euphorbiaceae</taxon>
        <taxon>Crotonoideae</taxon>
        <taxon>Micrandreae</taxon>
        <taxon>Hevea</taxon>
    </lineage>
</organism>
<dbReference type="EC" id="4.2.1.11"/>
<dbReference type="EMBL" id="AJ132580">
    <property type="protein sequence ID" value="CAC00532.1"/>
    <property type="molecule type" value="mRNA"/>
</dbReference>
<dbReference type="SMR" id="Q9LEJ0"/>
<dbReference type="Allergome" id="3317">
    <property type="allergen name" value="Hev b 9.0101"/>
</dbReference>
<dbReference type="Allergome" id="404">
    <property type="allergen name" value="Hev b 9"/>
</dbReference>
<dbReference type="BioCyc" id="MetaCyc:MONOMER-12858"/>
<dbReference type="BRENDA" id="4.2.1.11">
    <property type="organism ID" value="2665"/>
</dbReference>
<dbReference type="UniPathway" id="UPA00109">
    <property type="reaction ID" value="UER00187"/>
</dbReference>
<dbReference type="GO" id="GO:0000015">
    <property type="term" value="C:phosphopyruvate hydratase complex"/>
    <property type="evidence" value="ECO:0007669"/>
    <property type="project" value="InterPro"/>
</dbReference>
<dbReference type="GO" id="GO:0000287">
    <property type="term" value="F:magnesium ion binding"/>
    <property type="evidence" value="ECO:0007669"/>
    <property type="project" value="InterPro"/>
</dbReference>
<dbReference type="GO" id="GO:0004634">
    <property type="term" value="F:phosphopyruvate hydratase activity"/>
    <property type="evidence" value="ECO:0007669"/>
    <property type="project" value="UniProtKB-EC"/>
</dbReference>
<dbReference type="GO" id="GO:0006096">
    <property type="term" value="P:glycolytic process"/>
    <property type="evidence" value="ECO:0007669"/>
    <property type="project" value="UniProtKB-UniPathway"/>
</dbReference>
<dbReference type="CDD" id="cd03313">
    <property type="entry name" value="enolase"/>
    <property type="match status" value="1"/>
</dbReference>
<dbReference type="FunFam" id="3.30.390.10:FF:000001">
    <property type="entry name" value="Enolase"/>
    <property type="match status" value="1"/>
</dbReference>
<dbReference type="FunFam" id="3.20.20.120:FF:000002">
    <property type="entry name" value="Enolase 1"/>
    <property type="match status" value="1"/>
</dbReference>
<dbReference type="Gene3D" id="3.20.20.120">
    <property type="entry name" value="Enolase-like C-terminal domain"/>
    <property type="match status" value="1"/>
</dbReference>
<dbReference type="Gene3D" id="3.30.390.10">
    <property type="entry name" value="Enolase-like, N-terminal domain"/>
    <property type="match status" value="1"/>
</dbReference>
<dbReference type="HAMAP" id="MF_00318">
    <property type="entry name" value="Enolase"/>
    <property type="match status" value="1"/>
</dbReference>
<dbReference type="InterPro" id="IPR000941">
    <property type="entry name" value="Enolase"/>
</dbReference>
<dbReference type="InterPro" id="IPR036849">
    <property type="entry name" value="Enolase-like_C_sf"/>
</dbReference>
<dbReference type="InterPro" id="IPR029017">
    <property type="entry name" value="Enolase-like_N"/>
</dbReference>
<dbReference type="InterPro" id="IPR020810">
    <property type="entry name" value="Enolase_C"/>
</dbReference>
<dbReference type="InterPro" id="IPR020809">
    <property type="entry name" value="Enolase_CS"/>
</dbReference>
<dbReference type="InterPro" id="IPR020811">
    <property type="entry name" value="Enolase_N"/>
</dbReference>
<dbReference type="NCBIfam" id="TIGR01060">
    <property type="entry name" value="eno"/>
    <property type="match status" value="1"/>
</dbReference>
<dbReference type="PANTHER" id="PTHR11902">
    <property type="entry name" value="ENOLASE"/>
    <property type="match status" value="1"/>
</dbReference>
<dbReference type="PANTHER" id="PTHR11902:SF1">
    <property type="entry name" value="ENOLASE"/>
    <property type="match status" value="1"/>
</dbReference>
<dbReference type="Pfam" id="PF00113">
    <property type="entry name" value="Enolase_C"/>
    <property type="match status" value="1"/>
</dbReference>
<dbReference type="Pfam" id="PF03952">
    <property type="entry name" value="Enolase_N"/>
    <property type="match status" value="1"/>
</dbReference>
<dbReference type="PIRSF" id="PIRSF001400">
    <property type="entry name" value="Enolase"/>
    <property type="match status" value="1"/>
</dbReference>
<dbReference type="PRINTS" id="PR00148">
    <property type="entry name" value="ENOLASE"/>
</dbReference>
<dbReference type="SFLD" id="SFLDF00002">
    <property type="entry name" value="enolase"/>
    <property type="match status" value="1"/>
</dbReference>
<dbReference type="SFLD" id="SFLDG00178">
    <property type="entry name" value="enolase"/>
    <property type="match status" value="1"/>
</dbReference>
<dbReference type="SMART" id="SM01192">
    <property type="entry name" value="Enolase_C"/>
    <property type="match status" value="1"/>
</dbReference>
<dbReference type="SMART" id="SM01193">
    <property type="entry name" value="Enolase_N"/>
    <property type="match status" value="1"/>
</dbReference>
<dbReference type="SUPFAM" id="SSF51604">
    <property type="entry name" value="Enolase C-terminal domain-like"/>
    <property type="match status" value="1"/>
</dbReference>
<dbReference type="SUPFAM" id="SSF54826">
    <property type="entry name" value="Enolase N-terminal domain-like"/>
    <property type="match status" value="1"/>
</dbReference>
<dbReference type="PROSITE" id="PS00164">
    <property type="entry name" value="ENOLASE"/>
    <property type="match status" value="1"/>
</dbReference>
<sequence>MAITIVSVRARQIFDSRGNPTVEADVKLSDGYLARAAVPSGASTGIYEALELRDGGSDYLGKGVSKAVENVNIIIGPALVGKDPTDQVGIDNFMVQQLDGTVNEWGWCKQKLGANAILAVSLAVCKAGAHVKGIPLYEHIANLAGNKNLVLPVPAFNVINGGSHAGNKLAMQEFMILPVGASSFKEAMKMGAEVYHHLKSVIKKKYGQDATNVGDEGGFAPNIQENKEGLELLKTAIAKAGYTGKVVIGMDVAASEFYGSDQTYDLNFKEENNNGSQKISGEALKDLYKSFVAEYPIVSIEDPFDQDDWAHYAKLTSEIGEKVQIVGDDLLVTNPKRVEKAIKEKACNALLLKVNQIGSVTESIEAVKMSKRAGWGVMASHRSGETEDTFIADLSVGLATGQIKTGAPCRSERLAKYNQLLRIEEELGSEAVYAGANFRKPVEPY</sequence>
<proteinExistence type="evidence at protein level"/>
<name>ENO1_HEVBR</name>
<evidence type="ECO:0000250" key="1"/>
<evidence type="ECO:0000269" key="2">
    <source>
    </source>
</evidence>
<evidence type="ECO:0000305" key="3"/>
<feature type="chain" id="PRO_0000134069" description="Enolase 1">
    <location>
        <begin position="1"/>
        <end position="445"/>
    </location>
</feature>
<feature type="active site" description="Proton donor" evidence="1">
    <location>
        <position position="216"/>
    </location>
</feature>
<feature type="active site" description="Proton acceptor" evidence="1">
    <location>
        <position position="353"/>
    </location>
</feature>
<feature type="binding site" evidence="1">
    <location>
        <position position="164"/>
    </location>
    <ligand>
        <name>substrate</name>
    </ligand>
</feature>
<feature type="binding site" evidence="1">
    <location>
        <position position="173"/>
    </location>
    <ligand>
        <name>substrate</name>
    </ligand>
</feature>
<feature type="binding site" evidence="1">
    <location>
        <position position="251"/>
    </location>
    <ligand>
        <name>Mg(2+)</name>
        <dbReference type="ChEBI" id="CHEBI:18420"/>
    </ligand>
</feature>
<feature type="binding site" evidence="1">
    <location>
        <position position="301"/>
    </location>
    <ligand>
        <name>Mg(2+)</name>
        <dbReference type="ChEBI" id="CHEBI:18420"/>
    </ligand>
</feature>
<feature type="binding site" evidence="1">
    <location>
        <position position="301"/>
    </location>
    <ligand>
        <name>substrate</name>
    </ligand>
</feature>
<feature type="binding site" evidence="1">
    <location>
        <position position="328"/>
    </location>
    <ligand>
        <name>Mg(2+)</name>
        <dbReference type="ChEBI" id="CHEBI:18420"/>
    </ligand>
</feature>
<feature type="binding site" evidence="1">
    <location>
        <position position="328"/>
    </location>
    <ligand>
        <name>substrate</name>
    </ligand>
</feature>
<feature type="binding site" evidence="1">
    <location>
        <begin position="380"/>
        <end position="383"/>
    </location>
    <ligand>
        <name>substrate</name>
    </ligand>
</feature>
<feature type="binding site" evidence="1">
    <location>
        <position position="404"/>
    </location>
    <ligand>
        <name>substrate</name>
    </ligand>
</feature>
<comment type="catalytic activity">
    <reaction>
        <text>(2R)-2-phosphoglycerate = phosphoenolpyruvate + H2O</text>
        <dbReference type="Rhea" id="RHEA:10164"/>
        <dbReference type="ChEBI" id="CHEBI:15377"/>
        <dbReference type="ChEBI" id="CHEBI:58289"/>
        <dbReference type="ChEBI" id="CHEBI:58702"/>
        <dbReference type="EC" id="4.2.1.11"/>
    </reaction>
</comment>
<comment type="cofactor">
    <cofactor evidence="1">
        <name>Mg(2+)</name>
        <dbReference type="ChEBI" id="CHEBI:18420"/>
    </cofactor>
    <text evidence="1">Mg(2+) is required for catalysis and for stabilizing the dimer.</text>
</comment>
<comment type="pathway">
    <text>Carbohydrate degradation; glycolysis; pyruvate from D-glyceraldehyde 3-phosphate: step 4/5.</text>
</comment>
<comment type="subunit">
    <text evidence="1">Homodimer.</text>
</comment>
<comment type="subcellular location">
    <subcellularLocation>
        <location>Cytoplasm</location>
    </subcellularLocation>
</comment>
<comment type="allergen">
    <text evidence="2">Causes an allergic reaction in human. Involved in latex allergic reactions.</text>
</comment>
<comment type="similarity">
    <text evidence="3">Belongs to the enolase family.</text>
</comment>
<keyword id="KW-0020">Allergen</keyword>
<keyword id="KW-0963">Cytoplasm</keyword>
<keyword id="KW-0324">Glycolysis</keyword>
<keyword id="KW-0456">Lyase</keyword>
<keyword id="KW-0460">Magnesium</keyword>
<keyword id="KW-0479">Metal-binding</keyword>
<protein>
    <recommendedName>
        <fullName>Enolase 1</fullName>
        <ecNumber>4.2.1.11</ecNumber>
    </recommendedName>
    <alternativeName>
        <fullName>2-phospho-D-glycerate hydro-lyase 1</fullName>
    </alternativeName>
    <alternativeName>
        <fullName>2-phosphoglycerate dehydratase 1</fullName>
    </alternativeName>
    <allergenName>Hev b 9</allergenName>
</protein>
<gene>
    <name type="primary">ENO1</name>
</gene>